<dbReference type="EC" id="4.6.1.1"/>
<dbReference type="EMBL" id="X74768">
    <property type="protein sequence ID" value="CAA52780.2"/>
    <property type="status" value="ALT_INIT"/>
    <property type="molecule type" value="Genomic_DNA"/>
</dbReference>
<dbReference type="EMBL" id="AL939121">
    <property type="protein sequence ID" value="CAD30918.1"/>
    <property type="molecule type" value="Genomic_DNA"/>
</dbReference>
<dbReference type="PIR" id="S42625">
    <property type="entry name" value="S42625"/>
</dbReference>
<dbReference type="RefSeq" id="NP_629081.1">
    <property type="nucleotide sequence ID" value="NC_003888.3"/>
</dbReference>
<dbReference type="RefSeq" id="WP_011029954.1">
    <property type="nucleotide sequence ID" value="NZ_VNID01000027.1"/>
</dbReference>
<dbReference type="SMR" id="P40135"/>
<dbReference type="STRING" id="100226.gene:17762577"/>
<dbReference type="PaxDb" id="100226-SCO4928"/>
<dbReference type="KEGG" id="sco:SCO4928"/>
<dbReference type="PATRIC" id="fig|100226.15.peg.5007"/>
<dbReference type="eggNOG" id="COG2114">
    <property type="taxonomic scope" value="Bacteria"/>
</dbReference>
<dbReference type="HOGENOM" id="CLU_043761_0_0_11"/>
<dbReference type="InParanoid" id="P40135"/>
<dbReference type="OrthoDB" id="310836at2"/>
<dbReference type="PhylomeDB" id="P40135"/>
<dbReference type="Proteomes" id="UP000001973">
    <property type="component" value="Chromosome"/>
</dbReference>
<dbReference type="GO" id="GO:0004016">
    <property type="term" value="F:adenylate cyclase activity"/>
    <property type="evidence" value="ECO:0007669"/>
    <property type="project" value="UniProtKB-EC"/>
</dbReference>
<dbReference type="GO" id="GO:0005524">
    <property type="term" value="F:ATP binding"/>
    <property type="evidence" value="ECO:0007669"/>
    <property type="project" value="UniProtKB-KW"/>
</dbReference>
<dbReference type="GO" id="GO:0046872">
    <property type="term" value="F:metal ion binding"/>
    <property type="evidence" value="ECO:0007669"/>
    <property type="project" value="UniProtKB-KW"/>
</dbReference>
<dbReference type="GO" id="GO:0006171">
    <property type="term" value="P:cAMP biosynthetic process"/>
    <property type="evidence" value="ECO:0007669"/>
    <property type="project" value="UniProtKB-KW"/>
</dbReference>
<dbReference type="GO" id="GO:0035556">
    <property type="term" value="P:intracellular signal transduction"/>
    <property type="evidence" value="ECO:0007669"/>
    <property type="project" value="InterPro"/>
</dbReference>
<dbReference type="CDD" id="cd07302">
    <property type="entry name" value="CHD"/>
    <property type="match status" value="1"/>
</dbReference>
<dbReference type="Gene3D" id="3.30.70.1230">
    <property type="entry name" value="Nucleotide cyclase"/>
    <property type="match status" value="1"/>
</dbReference>
<dbReference type="InterPro" id="IPR001054">
    <property type="entry name" value="A/G_cyclase"/>
</dbReference>
<dbReference type="InterPro" id="IPR050697">
    <property type="entry name" value="Adenylyl/Guanylyl_Cyclase_3/4"/>
</dbReference>
<dbReference type="InterPro" id="IPR029787">
    <property type="entry name" value="Nucleotide_cyclase"/>
</dbReference>
<dbReference type="PANTHER" id="PTHR43081">
    <property type="entry name" value="ADENYLATE CYCLASE, TERMINAL-DIFFERENTIATION SPECIFIC-RELATED"/>
    <property type="match status" value="1"/>
</dbReference>
<dbReference type="PANTHER" id="PTHR43081:SF19">
    <property type="entry name" value="PH-SENSITIVE ADENYLATE CYCLASE RV1264"/>
    <property type="match status" value="1"/>
</dbReference>
<dbReference type="Pfam" id="PF00211">
    <property type="entry name" value="Guanylate_cyc"/>
    <property type="match status" value="1"/>
</dbReference>
<dbReference type="SMART" id="SM00044">
    <property type="entry name" value="CYCc"/>
    <property type="match status" value="1"/>
</dbReference>
<dbReference type="SUPFAM" id="SSF55073">
    <property type="entry name" value="Nucleotide cyclase"/>
    <property type="match status" value="1"/>
</dbReference>
<dbReference type="PROSITE" id="PS50125">
    <property type="entry name" value="GUANYLATE_CYCLASE_2"/>
    <property type="match status" value="1"/>
</dbReference>
<accession>P40135</accession>
<evidence type="ECO:0000250" key="1"/>
<evidence type="ECO:0000255" key="2">
    <source>
        <dbReference type="PROSITE-ProRule" id="PRU00099"/>
    </source>
</evidence>
<evidence type="ECO:0000256" key="3">
    <source>
        <dbReference type="SAM" id="MobiDB-lite"/>
    </source>
</evidence>
<evidence type="ECO:0000305" key="4"/>
<feature type="chain" id="PRO_0000195749" description="Adenylate cyclase">
    <location>
        <begin position="1"/>
        <end position="381"/>
    </location>
</feature>
<feature type="domain" description="Guanylate cyclase" evidence="2">
    <location>
        <begin position="191"/>
        <end position="300"/>
    </location>
</feature>
<feature type="region of interest" description="Disordered" evidence="3">
    <location>
        <begin position="1"/>
        <end position="30"/>
    </location>
</feature>
<feature type="binding site" evidence="1">
    <location>
        <position position="196"/>
    </location>
    <ligand>
        <name>Mg(2+)</name>
        <dbReference type="ChEBI" id="CHEBI:18420"/>
    </ligand>
</feature>
<feature type="binding site" evidence="1">
    <location>
        <position position="240"/>
    </location>
    <ligand>
        <name>Mg(2+)</name>
        <dbReference type="ChEBI" id="CHEBI:18420"/>
    </ligand>
</feature>
<name>CYAA_STRCO</name>
<gene>
    <name type="primary">cya</name>
    <name type="ordered locus">SCO4928</name>
    <name type="ORF">SCK13.20</name>
</gene>
<keyword id="KW-0067">ATP-binding</keyword>
<keyword id="KW-0115">cAMP biosynthesis</keyword>
<keyword id="KW-0456">Lyase</keyword>
<keyword id="KW-0460">Magnesium</keyword>
<keyword id="KW-0479">Metal-binding</keyword>
<keyword id="KW-0547">Nucleotide-binding</keyword>
<keyword id="KW-1185">Reference proteome</keyword>
<protein>
    <recommendedName>
        <fullName>Adenylate cyclase</fullName>
        <ecNumber>4.6.1.1</ecNumber>
    </recommendedName>
    <alternativeName>
        <fullName>ATP pyrophosphate-lyase</fullName>
    </alternativeName>
    <alternativeName>
        <fullName>Adenylyl cyclase</fullName>
    </alternativeName>
</protein>
<proteinExistence type="inferred from homology"/>
<organism>
    <name type="scientific">Streptomyces coelicolor (strain ATCC BAA-471 / A3(2) / M145)</name>
    <dbReference type="NCBI Taxonomy" id="100226"/>
    <lineage>
        <taxon>Bacteria</taxon>
        <taxon>Bacillati</taxon>
        <taxon>Actinomycetota</taxon>
        <taxon>Actinomycetes</taxon>
        <taxon>Kitasatosporales</taxon>
        <taxon>Streptomycetaceae</taxon>
        <taxon>Streptomyces</taxon>
        <taxon>Streptomyces albidoflavus group</taxon>
    </lineage>
</organism>
<comment type="catalytic activity">
    <reaction>
        <text>ATP = 3',5'-cyclic AMP + diphosphate</text>
        <dbReference type="Rhea" id="RHEA:15389"/>
        <dbReference type="ChEBI" id="CHEBI:30616"/>
        <dbReference type="ChEBI" id="CHEBI:33019"/>
        <dbReference type="ChEBI" id="CHEBI:58165"/>
        <dbReference type="EC" id="4.6.1.1"/>
    </reaction>
</comment>
<comment type="cofactor">
    <cofactor evidence="1">
        <name>Mg(2+)</name>
        <dbReference type="ChEBI" id="CHEBI:18420"/>
    </cofactor>
    <text evidence="1">Binds 1 Mg(2+) ion per subunit.</text>
</comment>
<comment type="similarity">
    <text evidence="4">Belongs to the adenylyl cyclase class-3 family.</text>
</comment>
<comment type="sequence caution" evidence="4">
    <conflict type="erroneous initiation">
        <sequence resource="EMBL-CDS" id="CAA52780"/>
    </conflict>
</comment>
<reference key="1">
    <citation type="journal article" date="1993" name="FEMS Microbiol. Lett.">
        <title>The adenylate cyclase catalytic domain of Streptomyces coelicolor is carboxy-terminal.</title>
        <authorList>
            <person name="Danchin A."/>
            <person name="Pidoux J."/>
            <person name="Krin E."/>
            <person name="Thompson C.J."/>
            <person name="Ullmann A."/>
        </authorList>
    </citation>
    <scope>NUCLEOTIDE SEQUENCE [GENOMIC DNA]</scope>
</reference>
<reference key="2">
    <citation type="journal article" date="2002" name="Nature">
        <title>Complete genome sequence of the model actinomycete Streptomyces coelicolor A3(2).</title>
        <authorList>
            <person name="Bentley S.D."/>
            <person name="Chater K.F."/>
            <person name="Cerdeno-Tarraga A.-M."/>
            <person name="Challis G.L."/>
            <person name="Thomson N.R."/>
            <person name="James K.D."/>
            <person name="Harris D.E."/>
            <person name="Quail M.A."/>
            <person name="Kieser H."/>
            <person name="Harper D."/>
            <person name="Bateman A."/>
            <person name="Brown S."/>
            <person name="Chandra G."/>
            <person name="Chen C.W."/>
            <person name="Collins M."/>
            <person name="Cronin A."/>
            <person name="Fraser A."/>
            <person name="Goble A."/>
            <person name="Hidalgo J."/>
            <person name="Hornsby T."/>
            <person name="Howarth S."/>
            <person name="Huang C.-H."/>
            <person name="Kieser T."/>
            <person name="Larke L."/>
            <person name="Murphy L.D."/>
            <person name="Oliver K."/>
            <person name="O'Neil S."/>
            <person name="Rabbinowitsch E."/>
            <person name="Rajandream M.A."/>
            <person name="Rutherford K.M."/>
            <person name="Rutter S."/>
            <person name="Seeger K."/>
            <person name="Saunders D."/>
            <person name="Sharp S."/>
            <person name="Squares R."/>
            <person name="Squares S."/>
            <person name="Taylor K."/>
            <person name="Warren T."/>
            <person name="Wietzorrek A."/>
            <person name="Woodward J.R."/>
            <person name="Barrell B.G."/>
            <person name="Parkhill J."/>
            <person name="Hopwood D.A."/>
        </authorList>
    </citation>
    <scope>NUCLEOTIDE SEQUENCE [LARGE SCALE GENOMIC DNA]</scope>
    <source>
        <strain>ATCC BAA-471 / A3(2) / M145</strain>
    </source>
</reference>
<sequence length="381" mass="40903">MTVDDTGSGADGDGRVDPEPAPDSADPGEDPLALRLEGLILGAERRYTPFQAARSAGVSMELASRFWRAMGFADIGQAKALTEADVLALRRLAGLVEAGLLSEAMAVQVARSTGQTTARLAEWQIDSFLEGLTEPPEPGMTRTEVTYPIVELLLPELQEFLVYVWRRQLAASAGRVIQAGDDEEMVDRRLAVGFADLVGFTRLTRRMEEEELGELVEAFETTSADLVAARGGRLVKTLGDEVLYAADDAGTAAEIALLLVETMAHDETMPELRVGIAFGTVTTRMGDVFGTTVNLASRLTSIAPKDAVLVDTAFAEELIRTRDAPASEAAAAEEAAAAEKEGEEPPVYRFALQPMWQRPVRGLGVVEPWLLTRRDGGGGEA</sequence>